<protein>
    <recommendedName>
        <fullName>Uncharacterized zinc protease Mb2805c</fullName>
        <ecNumber>3.4.24.-</ecNumber>
    </recommendedName>
</protein>
<evidence type="ECO:0000250" key="1"/>
<evidence type="ECO:0000255" key="2">
    <source>
        <dbReference type="PROSITE-ProRule" id="PRU10096"/>
    </source>
</evidence>
<evidence type="ECO:0000305" key="3"/>
<organism>
    <name type="scientific">Mycobacterium bovis (strain ATCC BAA-935 / AF2122/97)</name>
    <dbReference type="NCBI Taxonomy" id="233413"/>
    <lineage>
        <taxon>Bacteria</taxon>
        <taxon>Bacillati</taxon>
        <taxon>Actinomycetota</taxon>
        <taxon>Actinomycetes</taxon>
        <taxon>Mycobacteriales</taxon>
        <taxon>Mycobacteriaceae</taxon>
        <taxon>Mycobacterium</taxon>
        <taxon>Mycobacterium tuberculosis complex</taxon>
    </lineage>
</organism>
<dbReference type="EC" id="3.4.24.-"/>
<dbReference type="EMBL" id="LT708304">
    <property type="protein sequence ID" value="SIU01423.1"/>
    <property type="molecule type" value="Genomic_DNA"/>
</dbReference>
<dbReference type="RefSeq" id="NP_856451.1">
    <property type="nucleotide sequence ID" value="NC_002945.3"/>
</dbReference>
<dbReference type="RefSeq" id="WP_003414119.1">
    <property type="nucleotide sequence ID" value="NC_002945.4"/>
</dbReference>
<dbReference type="SMR" id="P0A5S9"/>
<dbReference type="KEGG" id="mbo:BQ2027_MB2805C"/>
<dbReference type="PATRIC" id="fig|233413.5.peg.3076"/>
<dbReference type="Proteomes" id="UP000001419">
    <property type="component" value="Chromosome"/>
</dbReference>
<dbReference type="GO" id="GO:0046872">
    <property type="term" value="F:metal ion binding"/>
    <property type="evidence" value="ECO:0007669"/>
    <property type="project" value="UniProtKB-KW"/>
</dbReference>
<dbReference type="GO" id="GO:0004222">
    <property type="term" value="F:metalloendopeptidase activity"/>
    <property type="evidence" value="ECO:0007669"/>
    <property type="project" value="InterPro"/>
</dbReference>
<dbReference type="GO" id="GO:0006508">
    <property type="term" value="P:proteolysis"/>
    <property type="evidence" value="ECO:0007669"/>
    <property type="project" value="UniProtKB-KW"/>
</dbReference>
<dbReference type="FunFam" id="3.30.830.10:FF:000008">
    <property type="entry name" value="Mitochondrial-processing peptidase subunit beta"/>
    <property type="match status" value="1"/>
</dbReference>
<dbReference type="FunFam" id="3.30.830.10:FF:000063">
    <property type="entry name" value="Zinc protease"/>
    <property type="match status" value="1"/>
</dbReference>
<dbReference type="Gene3D" id="3.30.830.10">
    <property type="entry name" value="Metalloenzyme, LuxS/M16 peptidase-like"/>
    <property type="match status" value="2"/>
</dbReference>
<dbReference type="InterPro" id="IPR011249">
    <property type="entry name" value="Metalloenz_LuxS/M16"/>
</dbReference>
<dbReference type="InterPro" id="IPR050361">
    <property type="entry name" value="MPP/UQCRC_Complex"/>
</dbReference>
<dbReference type="InterPro" id="IPR011765">
    <property type="entry name" value="Pept_M16_N"/>
</dbReference>
<dbReference type="InterPro" id="IPR001431">
    <property type="entry name" value="Pept_M16_Zn_BS"/>
</dbReference>
<dbReference type="InterPro" id="IPR007863">
    <property type="entry name" value="Peptidase_M16_C"/>
</dbReference>
<dbReference type="PANTHER" id="PTHR11851">
    <property type="entry name" value="METALLOPROTEASE"/>
    <property type="match status" value="1"/>
</dbReference>
<dbReference type="PANTHER" id="PTHR11851:SF49">
    <property type="entry name" value="MITOCHONDRIAL-PROCESSING PEPTIDASE SUBUNIT ALPHA"/>
    <property type="match status" value="1"/>
</dbReference>
<dbReference type="Pfam" id="PF00675">
    <property type="entry name" value="Peptidase_M16"/>
    <property type="match status" value="1"/>
</dbReference>
<dbReference type="Pfam" id="PF05193">
    <property type="entry name" value="Peptidase_M16_C"/>
    <property type="match status" value="1"/>
</dbReference>
<dbReference type="SUPFAM" id="SSF63411">
    <property type="entry name" value="LuxS/MPP-like metallohydrolase"/>
    <property type="match status" value="2"/>
</dbReference>
<dbReference type="PROSITE" id="PS00143">
    <property type="entry name" value="INSULINASE"/>
    <property type="match status" value="1"/>
</dbReference>
<reference key="1">
    <citation type="journal article" date="2003" name="Proc. Natl. Acad. Sci. U.S.A.">
        <title>The complete genome sequence of Mycobacterium bovis.</title>
        <authorList>
            <person name="Garnier T."/>
            <person name="Eiglmeier K."/>
            <person name="Camus J.-C."/>
            <person name="Medina N."/>
            <person name="Mansoor H."/>
            <person name="Pryor M."/>
            <person name="Duthoy S."/>
            <person name="Grondin S."/>
            <person name="Lacroix C."/>
            <person name="Monsempe C."/>
            <person name="Simon S."/>
            <person name="Harris B."/>
            <person name="Atkin R."/>
            <person name="Doggett J."/>
            <person name="Mayes R."/>
            <person name="Keating L."/>
            <person name="Wheeler P.R."/>
            <person name="Parkhill J."/>
            <person name="Barrell B.G."/>
            <person name="Cole S.T."/>
            <person name="Gordon S.V."/>
            <person name="Hewinson R.G."/>
        </authorList>
    </citation>
    <scope>NUCLEOTIDE SEQUENCE [LARGE SCALE GENOMIC DNA]</scope>
    <source>
        <strain>ATCC BAA-935 / AF2122/97</strain>
    </source>
</reference>
<reference key="2">
    <citation type="journal article" date="2017" name="Genome Announc.">
        <title>Updated reference genome sequence and annotation of Mycobacterium bovis AF2122/97.</title>
        <authorList>
            <person name="Malone K.M."/>
            <person name="Farrell D."/>
            <person name="Stuber T.P."/>
            <person name="Schubert O.T."/>
            <person name="Aebersold R."/>
            <person name="Robbe-Austerman S."/>
            <person name="Gordon S.V."/>
        </authorList>
    </citation>
    <scope>NUCLEOTIDE SEQUENCE [LARGE SCALE GENOMIC DNA]</scope>
    <scope>GENOME REANNOTATION</scope>
    <source>
        <strain>ATCC BAA-935 / AF2122/97</strain>
    </source>
</reference>
<keyword id="KW-0378">Hydrolase</keyword>
<keyword id="KW-0479">Metal-binding</keyword>
<keyword id="KW-0482">Metalloprotease</keyword>
<keyword id="KW-0645">Protease</keyword>
<keyword id="KW-1185">Reference proteome</keyword>
<keyword id="KW-0862">Zinc</keyword>
<proteinExistence type="inferred from homology"/>
<comment type="cofactor">
    <cofactor evidence="1">
        <name>Zn(2+)</name>
        <dbReference type="ChEBI" id="CHEBI:29105"/>
    </cofactor>
    <text evidence="1">Binds 1 zinc ion per subunit.</text>
</comment>
<comment type="similarity">
    <text evidence="3">Belongs to the peptidase M16 family.</text>
</comment>
<feature type="chain" id="PRO_0000074422" description="Uncharacterized zinc protease Mb2805c">
    <location>
        <begin position="1"/>
        <end position="438"/>
    </location>
</feature>
<feature type="active site" description="Proton acceptor" evidence="2">
    <location>
        <position position="62"/>
    </location>
</feature>
<feature type="binding site" evidence="2">
    <location>
        <position position="59"/>
    </location>
    <ligand>
        <name>Zn(2+)</name>
        <dbReference type="ChEBI" id="CHEBI:29105"/>
    </ligand>
</feature>
<feature type="binding site" evidence="2">
    <location>
        <position position="63"/>
    </location>
    <ligand>
        <name>Zn(2+)</name>
        <dbReference type="ChEBI" id="CHEBI:29105"/>
    </ligand>
</feature>
<feature type="binding site" evidence="2">
    <location>
        <position position="139"/>
    </location>
    <ligand>
        <name>Zn(2+)</name>
        <dbReference type="ChEBI" id="CHEBI:29105"/>
    </ligand>
</feature>
<name>Y2805_MYCBO</name>
<accession>P0A5S9</accession>
<accession>A0A1R3Y248</accession>
<accession>O33324</accession>
<accession>X2BLH9</accession>
<sequence>MPRRSPADPAAALAPRRTTLPGGLRVVTEFLPAVHSASVGVWVGVGSRDEGATVAGAAHFLEHLLFKSTPTRSAVDIAQAMDAVGGELNAFTAKEHTCYYAHVLGSDLPLAVDLVADVVLNGRCAADDVEVERDVVLEEIAMRDDDPEDALADMFLAALFGDHPVGRPVIGSAQSVSVMTRAQLQSFHLRRYTPERMVVAAAGNVDHDGLVALVREHFGSRLVRGRRPVAPRKGTGRVNGSPRLTLVSRDAEQTHVSLGIRTPGRGWEHRWALSVLHTALGGGLSSRLFQEVRETRGLAYSVYSALDLFADSGALSVYAACLPERFADVMRVTADVLESVARDGITEAECGIAKGSLRGGLVLGLEDSSSRMSRLGRSELNYGKHRSIEHTLRQIEQVTVEEVNAVARHLLSRRYGAAVLGPHGSKRSLPQQLRAMVG</sequence>
<gene>
    <name type="ordered locus">BQ2027_MB2805C</name>
</gene>